<evidence type="ECO:0000255" key="1">
    <source>
        <dbReference type="HAMAP-Rule" id="MF_00385"/>
    </source>
</evidence>
<evidence type="ECO:0000305" key="2"/>
<gene>
    <name evidence="1" type="primary">rpsP</name>
    <name type="ordered locus">TDE_0881</name>
</gene>
<organism>
    <name type="scientific">Treponema denticola (strain ATCC 35405 / DSM 14222 / CIP 103919 / JCM 8153 / KCTC 15104)</name>
    <dbReference type="NCBI Taxonomy" id="243275"/>
    <lineage>
        <taxon>Bacteria</taxon>
        <taxon>Pseudomonadati</taxon>
        <taxon>Spirochaetota</taxon>
        <taxon>Spirochaetia</taxon>
        <taxon>Spirochaetales</taxon>
        <taxon>Treponemataceae</taxon>
        <taxon>Treponema</taxon>
    </lineage>
</organism>
<comment type="similarity">
    <text evidence="1">Belongs to the bacterial ribosomal protein bS16 family.</text>
</comment>
<protein>
    <recommendedName>
        <fullName evidence="1">Small ribosomal subunit protein bS16</fullName>
    </recommendedName>
    <alternativeName>
        <fullName evidence="2">30S ribosomal protein S16</fullName>
    </alternativeName>
</protein>
<dbReference type="EMBL" id="AE017226">
    <property type="protein sequence ID" value="AAS11372.1"/>
    <property type="molecule type" value="Genomic_DNA"/>
</dbReference>
<dbReference type="RefSeq" id="NP_971491.1">
    <property type="nucleotide sequence ID" value="NC_002967.9"/>
</dbReference>
<dbReference type="RefSeq" id="WP_002670213.1">
    <property type="nucleotide sequence ID" value="NC_002967.9"/>
</dbReference>
<dbReference type="SMR" id="P62239"/>
<dbReference type="STRING" id="243275.TDE_0881"/>
<dbReference type="PaxDb" id="243275-TDE_0881"/>
<dbReference type="GeneID" id="2740928"/>
<dbReference type="KEGG" id="tde:TDE_0881"/>
<dbReference type="PATRIC" id="fig|243275.7.peg.851"/>
<dbReference type="eggNOG" id="COG0228">
    <property type="taxonomic scope" value="Bacteria"/>
</dbReference>
<dbReference type="HOGENOM" id="CLU_100590_5_0_12"/>
<dbReference type="OrthoDB" id="9807878at2"/>
<dbReference type="Proteomes" id="UP000008212">
    <property type="component" value="Chromosome"/>
</dbReference>
<dbReference type="GO" id="GO:0005737">
    <property type="term" value="C:cytoplasm"/>
    <property type="evidence" value="ECO:0007669"/>
    <property type="project" value="UniProtKB-ARBA"/>
</dbReference>
<dbReference type="GO" id="GO:0015935">
    <property type="term" value="C:small ribosomal subunit"/>
    <property type="evidence" value="ECO:0007669"/>
    <property type="project" value="TreeGrafter"/>
</dbReference>
<dbReference type="GO" id="GO:0003735">
    <property type="term" value="F:structural constituent of ribosome"/>
    <property type="evidence" value="ECO:0007669"/>
    <property type="project" value="InterPro"/>
</dbReference>
<dbReference type="GO" id="GO:0006412">
    <property type="term" value="P:translation"/>
    <property type="evidence" value="ECO:0007669"/>
    <property type="project" value="UniProtKB-UniRule"/>
</dbReference>
<dbReference type="Gene3D" id="3.30.1320.10">
    <property type="match status" value="1"/>
</dbReference>
<dbReference type="HAMAP" id="MF_00385">
    <property type="entry name" value="Ribosomal_bS16"/>
    <property type="match status" value="1"/>
</dbReference>
<dbReference type="InterPro" id="IPR000307">
    <property type="entry name" value="Ribosomal_bS16"/>
</dbReference>
<dbReference type="InterPro" id="IPR023803">
    <property type="entry name" value="Ribosomal_bS16_dom_sf"/>
</dbReference>
<dbReference type="NCBIfam" id="TIGR00002">
    <property type="entry name" value="S16"/>
    <property type="match status" value="1"/>
</dbReference>
<dbReference type="PANTHER" id="PTHR12919">
    <property type="entry name" value="30S RIBOSOMAL PROTEIN S16"/>
    <property type="match status" value="1"/>
</dbReference>
<dbReference type="PANTHER" id="PTHR12919:SF20">
    <property type="entry name" value="SMALL RIBOSOMAL SUBUNIT PROTEIN BS16M"/>
    <property type="match status" value="1"/>
</dbReference>
<dbReference type="Pfam" id="PF00886">
    <property type="entry name" value="Ribosomal_S16"/>
    <property type="match status" value="1"/>
</dbReference>
<dbReference type="SUPFAM" id="SSF54565">
    <property type="entry name" value="Ribosomal protein S16"/>
    <property type="match status" value="1"/>
</dbReference>
<feature type="chain" id="PRO_0000167273" description="Small ribosomal subunit protein bS16">
    <location>
        <begin position="1"/>
        <end position="81"/>
    </location>
</feature>
<sequence>MVKIRLKRLGTKKRPYYRIVVQDVREPRNGKTIDEVGIYHPIETAEKQISFDADKVRNWLGKGAQPTDTVRRLLNKKEFTL</sequence>
<accession>P62239</accession>
<proteinExistence type="inferred from homology"/>
<name>RS16_TREDE</name>
<keyword id="KW-1185">Reference proteome</keyword>
<keyword id="KW-0687">Ribonucleoprotein</keyword>
<keyword id="KW-0689">Ribosomal protein</keyword>
<reference key="1">
    <citation type="journal article" date="2004" name="Proc. Natl. Acad. Sci. U.S.A.">
        <title>Comparison of the genome of the oral pathogen Treponema denticola with other spirochete genomes.</title>
        <authorList>
            <person name="Seshadri R."/>
            <person name="Myers G.S.A."/>
            <person name="Tettelin H."/>
            <person name="Eisen J.A."/>
            <person name="Heidelberg J.F."/>
            <person name="Dodson R.J."/>
            <person name="Davidsen T.M."/>
            <person name="DeBoy R.T."/>
            <person name="Fouts D.E."/>
            <person name="Haft D.H."/>
            <person name="Selengut J."/>
            <person name="Ren Q."/>
            <person name="Brinkac L.M."/>
            <person name="Madupu R."/>
            <person name="Kolonay J.F."/>
            <person name="Durkin S.A."/>
            <person name="Daugherty S.C."/>
            <person name="Shetty J."/>
            <person name="Shvartsbeyn A."/>
            <person name="Gebregeorgis E."/>
            <person name="Geer K."/>
            <person name="Tsegaye G."/>
            <person name="Malek J.A."/>
            <person name="Ayodeji B."/>
            <person name="Shatsman S."/>
            <person name="McLeod M.P."/>
            <person name="Smajs D."/>
            <person name="Howell J.K."/>
            <person name="Pal S."/>
            <person name="Amin A."/>
            <person name="Vashisth P."/>
            <person name="McNeill T.Z."/>
            <person name="Xiang Q."/>
            <person name="Sodergren E."/>
            <person name="Baca E."/>
            <person name="Weinstock G.M."/>
            <person name="Norris S.J."/>
            <person name="Fraser C.M."/>
            <person name="Paulsen I.T."/>
        </authorList>
    </citation>
    <scope>NUCLEOTIDE SEQUENCE [LARGE SCALE GENOMIC DNA]</scope>
    <source>
        <strain>ATCC 35405 / DSM 14222 / CIP 103919 / JCM 8153 / KCTC 15104</strain>
    </source>
</reference>